<comment type="function">
    <text evidence="1">Catalyzes the synthesis of the hydroxymethylpyrimidine phosphate (HMP-P) moiety of thiamine from aminoimidazole ribotide (AIR) in a radical S-adenosyl-L-methionine (SAM)-dependent reaction.</text>
</comment>
<comment type="catalytic activity">
    <reaction evidence="1">
        <text>5-amino-1-(5-phospho-beta-D-ribosyl)imidazole + S-adenosyl-L-methionine = 4-amino-2-methyl-5-(phosphooxymethyl)pyrimidine + CO + 5'-deoxyadenosine + formate + L-methionine + 3 H(+)</text>
        <dbReference type="Rhea" id="RHEA:24840"/>
        <dbReference type="ChEBI" id="CHEBI:15378"/>
        <dbReference type="ChEBI" id="CHEBI:15740"/>
        <dbReference type="ChEBI" id="CHEBI:17245"/>
        <dbReference type="ChEBI" id="CHEBI:17319"/>
        <dbReference type="ChEBI" id="CHEBI:57844"/>
        <dbReference type="ChEBI" id="CHEBI:58354"/>
        <dbReference type="ChEBI" id="CHEBI:59789"/>
        <dbReference type="ChEBI" id="CHEBI:137981"/>
        <dbReference type="EC" id="4.1.99.17"/>
    </reaction>
</comment>
<comment type="cofactor">
    <cofactor evidence="1">
        <name>[4Fe-4S] cluster</name>
        <dbReference type="ChEBI" id="CHEBI:49883"/>
    </cofactor>
    <text evidence="1">Binds 1 [4Fe-4S] cluster per subunit. The cluster is coordinated with 3 cysteines and an exchangeable S-adenosyl-L-methionine.</text>
</comment>
<comment type="pathway">
    <text evidence="1">Cofactor biosynthesis; thiamine diphosphate biosynthesis.</text>
</comment>
<comment type="subunit">
    <text evidence="1">Homodimer.</text>
</comment>
<comment type="similarity">
    <text evidence="1">Belongs to the ThiC family.</text>
</comment>
<feature type="chain" id="PRO_1000004731" description="Phosphomethylpyrimidine synthase">
    <location>
        <begin position="1"/>
        <end position="638"/>
    </location>
</feature>
<feature type="binding site" evidence="1">
    <location>
        <position position="243"/>
    </location>
    <ligand>
        <name>substrate</name>
    </ligand>
</feature>
<feature type="binding site" evidence="1">
    <location>
        <position position="272"/>
    </location>
    <ligand>
        <name>substrate</name>
    </ligand>
</feature>
<feature type="binding site" evidence="1">
    <location>
        <position position="301"/>
    </location>
    <ligand>
        <name>substrate</name>
    </ligand>
</feature>
<feature type="binding site" evidence="1">
    <location>
        <position position="337"/>
    </location>
    <ligand>
        <name>substrate</name>
    </ligand>
</feature>
<feature type="binding site" evidence="1">
    <location>
        <begin position="357"/>
        <end position="359"/>
    </location>
    <ligand>
        <name>substrate</name>
    </ligand>
</feature>
<feature type="binding site" evidence="1">
    <location>
        <begin position="398"/>
        <end position="401"/>
    </location>
    <ligand>
        <name>substrate</name>
    </ligand>
</feature>
<feature type="binding site" evidence="1">
    <location>
        <position position="437"/>
    </location>
    <ligand>
        <name>substrate</name>
    </ligand>
</feature>
<feature type="binding site" evidence="1">
    <location>
        <position position="441"/>
    </location>
    <ligand>
        <name>Zn(2+)</name>
        <dbReference type="ChEBI" id="CHEBI:29105"/>
    </ligand>
</feature>
<feature type="binding site" evidence="1">
    <location>
        <position position="464"/>
    </location>
    <ligand>
        <name>substrate</name>
    </ligand>
</feature>
<feature type="binding site" evidence="1">
    <location>
        <position position="505"/>
    </location>
    <ligand>
        <name>Zn(2+)</name>
        <dbReference type="ChEBI" id="CHEBI:29105"/>
    </ligand>
</feature>
<feature type="binding site" evidence="1">
    <location>
        <position position="585"/>
    </location>
    <ligand>
        <name>[4Fe-4S] cluster</name>
        <dbReference type="ChEBI" id="CHEBI:49883"/>
        <note>4Fe-4S-S-AdoMet</note>
    </ligand>
</feature>
<feature type="binding site" evidence="1">
    <location>
        <position position="588"/>
    </location>
    <ligand>
        <name>[4Fe-4S] cluster</name>
        <dbReference type="ChEBI" id="CHEBI:49883"/>
        <note>4Fe-4S-S-AdoMet</note>
    </ligand>
</feature>
<feature type="binding site" evidence="1">
    <location>
        <position position="593"/>
    </location>
    <ligand>
        <name>[4Fe-4S] cluster</name>
        <dbReference type="ChEBI" id="CHEBI:49883"/>
        <note>4Fe-4S-S-AdoMet</note>
    </ligand>
</feature>
<dbReference type="EC" id="4.1.99.17" evidence="1"/>
<dbReference type="EMBL" id="AM406670">
    <property type="protein sequence ID" value="CAL93457.1"/>
    <property type="molecule type" value="Genomic_DNA"/>
</dbReference>
<dbReference type="RefSeq" id="WP_011764574.1">
    <property type="nucleotide sequence ID" value="NC_008702.1"/>
</dbReference>
<dbReference type="SMR" id="A1K3Q2"/>
<dbReference type="STRING" id="62928.azo0840"/>
<dbReference type="KEGG" id="aoa:dqs_0911"/>
<dbReference type="KEGG" id="azo:azo0840"/>
<dbReference type="eggNOG" id="COG0422">
    <property type="taxonomic scope" value="Bacteria"/>
</dbReference>
<dbReference type="HOGENOM" id="CLU_013181_2_1_4"/>
<dbReference type="OrthoDB" id="9805897at2"/>
<dbReference type="UniPathway" id="UPA00060"/>
<dbReference type="Proteomes" id="UP000002588">
    <property type="component" value="Chromosome"/>
</dbReference>
<dbReference type="GO" id="GO:0005829">
    <property type="term" value="C:cytosol"/>
    <property type="evidence" value="ECO:0007669"/>
    <property type="project" value="TreeGrafter"/>
</dbReference>
<dbReference type="GO" id="GO:0051539">
    <property type="term" value="F:4 iron, 4 sulfur cluster binding"/>
    <property type="evidence" value="ECO:0007669"/>
    <property type="project" value="UniProtKB-KW"/>
</dbReference>
<dbReference type="GO" id="GO:0016830">
    <property type="term" value="F:carbon-carbon lyase activity"/>
    <property type="evidence" value="ECO:0007669"/>
    <property type="project" value="InterPro"/>
</dbReference>
<dbReference type="GO" id="GO:0008270">
    <property type="term" value="F:zinc ion binding"/>
    <property type="evidence" value="ECO:0007669"/>
    <property type="project" value="UniProtKB-UniRule"/>
</dbReference>
<dbReference type="GO" id="GO:0009228">
    <property type="term" value="P:thiamine biosynthetic process"/>
    <property type="evidence" value="ECO:0007669"/>
    <property type="project" value="UniProtKB-KW"/>
</dbReference>
<dbReference type="GO" id="GO:0009229">
    <property type="term" value="P:thiamine diphosphate biosynthetic process"/>
    <property type="evidence" value="ECO:0007669"/>
    <property type="project" value="UniProtKB-UniRule"/>
</dbReference>
<dbReference type="FunFam" id="3.20.20.540:FF:000001">
    <property type="entry name" value="Phosphomethylpyrimidine synthase"/>
    <property type="match status" value="1"/>
</dbReference>
<dbReference type="Gene3D" id="6.10.250.620">
    <property type="match status" value="1"/>
</dbReference>
<dbReference type="Gene3D" id="3.20.20.540">
    <property type="entry name" value="Radical SAM ThiC family, central domain"/>
    <property type="match status" value="1"/>
</dbReference>
<dbReference type="HAMAP" id="MF_00089">
    <property type="entry name" value="ThiC"/>
    <property type="match status" value="1"/>
</dbReference>
<dbReference type="InterPro" id="IPR037509">
    <property type="entry name" value="ThiC"/>
</dbReference>
<dbReference type="InterPro" id="IPR025747">
    <property type="entry name" value="ThiC-associated_dom"/>
</dbReference>
<dbReference type="InterPro" id="IPR038521">
    <property type="entry name" value="ThiC/Bza_core_dom"/>
</dbReference>
<dbReference type="InterPro" id="IPR002817">
    <property type="entry name" value="ThiC/BzaA/B"/>
</dbReference>
<dbReference type="NCBIfam" id="NF006763">
    <property type="entry name" value="PRK09284.1"/>
    <property type="match status" value="1"/>
</dbReference>
<dbReference type="NCBIfam" id="NF009895">
    <property type="entry name" value="PRK13352.1"/>
    <property type="match status" value="1"/>
</dbReference>
<dbReference type="NCBIfam" id="TIGR00190">
    <property type="entry name" value="thiC"/>
    <property type="match status" value="1"/>
</dbReference>
<dbReference type="PANTHER" id="PTHR30557:SF1">
    <property type="entry name" value="PHOSPHOMETHYLPYRIMIDINE SYNTHASE, CHLOROPLASTIC"/>
    <property type="match status" value="1"/>
</dbReference>
<dbReference type="PANTHER" id="PTHR30557">
    <property type="entry name" value="THIAMINE BIOSYNTHESIS PROTEIN THIC"/>
    <property type="match status" value="1"/>
</dbReference>
<dbReference type="Pfam" id="PF13667">
    <property type="entry name" value="ThiC-associated"/>
    <property type="match status" value="1"/>
</dbReference>
<dbReference type="Pfam" id="PF01964">
    <property type="entry name" value="ThiC_Rad_SAM"/>
    <property type="match status" value="1"/>
</dbReference>
<dbReference type="SFLD" id="SFLDF00407">
    <property type="entry name" value="phosphomethylpyrimidine_syntha"/>
    <property type="match status" value="1"/>
</dbReference>
<dbReference type="SFLD" id="SFLDG01114">
    <property type="entry name" value="phosphomethylpyrimidine_syntha"/>
    <property type="match status" value="1"/>
</dbReference>
<dbReference type="SFLD" id="SFLDS00113">
    <property type="entry name" value="Radical_SAM_Phosphomethylpyrim"/>
    <property type="match status" value="1"/>
</dbReference>
<keyword id="KW-0004">4Fe-4S</keyword>
<keyword id="KW-0408">Iron</keyword>
<keyword id="KW-0411">Iron-sulfur</keyword>
<keyword id="KW-0456">Lyase</keyword>
<keyword id="KW-0479">Metal-binding</keyword>
<keyword id="KW-1185">Reference proteome</keyword>
<keyword id="KW-0949">S-adenosyl-L-methionine</keyword>
<keyword id="KW-0784">Thiamine biosynthesis</keyword>
<keyword id="KW-0862">Zinc</keyword>
<reference key="1">
    <citation type="journal article" date="2006" name="Nat. Biotechnol.">
        <title>Complete genome of the mutualistic, N2-fixing grass endophyte Azoarcus sp. strain BH72.</title>
        <authorList>
            <person name="Krause A."/>
            <person name="Ramakumar A."/>
            <person name="Bartels D."/>
            <person name="Battistoni F."/>
            <person name="Bekel T."/>
            <person name="Boch J."/>
            <person name="Boehm M."/>
            <person name="Friedrich F."/>
            <person name="Hurek T."/>
            <person name="Krause L."/>
            <person name="Linke B."/>
            <person name="McHardy A.C."/>
            <person name="Sarkar A."/>
            <person name="Schneiker S."/>
            <person name="Syed A.A."/>
            <person name="Thauer R."/>
            <person name="Vorhoelter F.-J."/>
            <person name="Weidner S."/>
            <person name="Puehler A."/>
            <person name="Reinhold-Hurek B."/>
            <person name="Kaiser O."/>
            <person name="Goesmann A."/>
        </authorList>
    </citation>
    <scope>NUCLEOTIDE SEQUENCE [LARGE SCALE GENOMIC DNA]</scope>
    <source>
        <strain>BH72</strain>
    </source>
</reference>
<name>THIC_AZOSB</name>
<sequence>MNAKEHFIATEAKVDEAAIAPLPNSRKIYVEGSRPDIRVPMREIRQSDTPASFGAEPNPPIFVYDCSGPYTDPAAKIDIRSGLPALRAGWIAERGDTEQLADLSSEYGRQRAADPRLDELRFPGLHRKPLRARAGANVTQMHYARRGIVTPEMEYIAIRENLRRKDYLESLLAAGPTGQKMAALLTRQHPGQNFGAAIPNEITPEFVRDEVARGRAIIPANINHPETEPMIIGRNFLVKINANIGNSALGSSIAEEVDKMTWSIRWGGDTVMDLSTGKNIHETREWIIRNSPVPIGTVPIYQALEKVDGKAEDLTWEIFRDTLIEQAEQGVDYFTIHAGVLLRYIPLTANRMTGIVSRGGSIMAKWCLAHHKESFLYTHFEDICEIMKAYDVAFSLGDGLRPGSIYDANDEAQLGELKTLGELTDIAWKHDVQVMIEGPGHVPLHMIKENMDLQLEQCKEAPFYTLGPLTTDIAPGYDHITSGIGAATIGWYGTAMLCYVTPKEHLGLPNKQDVKEGIITYKLAAHAADLAKGHPGAQIRDNALSKARFEFRWEDQFNLGLDPDKAKEFHDETLPKESAKVAHFCSMCGPHFCSMKITQDVRDFAAQQGVDEAEALQKGMEVKAVEFVKSGAEVYRNV</sequence>
<protein>
    <recommendedName>
        <fullName evidence="1">Phosphomethylpyrimidine synthase</fullName>
        <ecNumber evidence="1">4.1.99.17</ecNumber>
    </recommendedName>
    <alternativeName>
        <fullName evidence="1">Hydroxymethylpyrimidine phosphate synthase</fullName>
        <shortName evidence="1">HMP-P synthase</shortName>
        <shortName evidence="1">HMP-phosphate synthase</shortName>
        <shortName evidence="1">HMPP synthase</shortName>
    </alternativeName>
    <alternativeName>
        <fullName evidence="1">Thiamine biosynthesis protein ThiC</fullName>
    </alternativeName>
</protein>
<proteinExistence type="inferred from homology"/>
<gene>
    <name evidence="1" type="primary">thiC</name>
    <name type="ordered locus">azo0840</name>
</gene>
<accession>A1K3Q2</accession>
<evidence type="ECO:0000255" key="1">
    <source>
        <dbReference type="HAMAP-Rule" id="MF_00089"/>
    </source>
</evidence>
<organism>
    <name type="scientific">Azoarcus sp. (strain BH72)</name>
    <dbReference type="NCBI Taxonomy" id="418699"/>
    <lineage>
        <taxon>Bacteria</taxon>
        <taxon>Pseudomonadati</taxon>
        <taxon>Pseudomonadota</taxon>
        <taxon>Betaproteobacteria</taxon>
        <taxon>Rhodocyclales</taxon>
        <taxon>Zoogloeaceae</taxon>
        <taxon>Azoarcus</taxon>
    </lineage>
</organism>